<comment type="function">
    <text evidence="1">The heterodimer acts as both an ATP-dependent DNA helicase and an ATP-dependent, dual-direction single-stranded exonuclease. Recognizes the chi site generating a DNA molecule suitable for the initiation of homologous recombination. The AddB subunit has 5' -&gt; 3' nuclease activity but not helicase activity.</text>
</comment>
<comment type="cofactor">
    <cofactor evidence="1">
        <name>Mg(2+)</name>
        <dbReference type="ChEBI" id="CHEBI:18420"/>
    </cofactor>
</comment>
<comment type="cofactor">
    <cofactor evidence="1">
        <name>[4Fe-4S] cluster</name>
        <dbReference type="ChEBI" id="CHEBI:49883"/>
    </cofactor>
    <text evidence="1">Binds 1 [4Fe-4S] cluster.</text>
</comment>
<comment type="subunit">
    <text evidence="1">Heterodimer of AddA and AddB.</text>
</comment>
<comment type="miscellaneous">
    <text evidence="1">Despite having conserved helicase domains, this subunit does not have helicase activity.</text>
</comment>
<comment type="similarity">
    <text evidence="1">Belongs to the helicase family. AddB/RexB type 1 subfamily.</text>
</comment>
<feature type="chain" id="PRO_0000379176" description="ATP-dependent helicase/deoxyribonuclease subunit B">
    <location>
        <begin position="1"/>
        <end position="1149"/>
    </location>
</feature>
<feature type="binding site" evidence="1">
    <location>
        <begin position="8"/>
        <end position="15"/>
    </location>
    <ligand>
        <name>ATP</name>
        <dbReference type="ChEBI" id="CHEBI:30616"/>
    </ligand>
</feature>
<feature type="binding site" evidence="1">
    <location>
        <position position="788"/>
    </location>
    <ligand>
        <name>[4Fe-4S] cluster</name>
        <dbReference type="ChEBI" id="CHEBI:49883"/>
    </ligand>
</feature>
<feature type="binding site" evidence="1">
    <location>
        <position position="1106"/>
    </location>
    <ligand>
        <name>[4Fe-4S] cluster</name>
        <dbReference type="ChEBI" id="CHEBI:49883"/>
    </ligand>
</feature>
<feature type="binding site" evidence="1">
    <location>
        <position position="1109"/>
    </location>
    <ligand>
        <name>[4Fe-4S] cluster</name>
        <dbReference type="ChEBI" id="CHEBI:49883"/>
    </ligand>
</feature>
<feature type="binding site" evidence="1">
    <location>
        <position position="1115"/>
    </location>
    <ligand>
        <name>[4Fe-4S] cluster</name>
        <dbReference type="ChEBI" id="CHEBI:49883"/>
    </ligand>
</feature>
<proteinExistence type="inferred from homology"/>
<protein>
    <recommendedName>
        <fullName evidence="1">ATP-dependent helicase/deoxyribonuclease subunit B</fullName>
        <ecNumber evidence="1">3.1.-.-</ecNumber>
    </recommendedName>
    <alternativeName>
        <fullName evidence="1">ATP-dependent helicase/nuclease subunit AddB</fullName>
    </alternativeName>
</protein>
<evidence type="ECO:0000255" key="1">
    <source>
        <dbReference type="HAMAP-Rule" id="MF_01452"/>
    </source>
</evidence>
<organism>
    <name type="scientific">Ruminiclostridium cellulolyticum (strain ATCC 35319 / DSM 5812 / JCM 6584 / H10)</name>
    <name type="common">Clostridium cellulolyticum</name>
    <dbReference type="NCBI Taxonomy" id="394503"/>
    <lineage>
        <taxon>Bacteria</taxon>
        <taxon>Bacillati</taxon>
        <taxon>Bacillota</taxon>
        <taxon>Clostridia</taxon>
        <taxon>Eubacteriales</taxon>
        <taxon>Oscillospiraceae</taxon>
        <taxon>Ruminiclostridium</taxon>
    </lineage>
</organism>
<reference key="1">
    <citation type="submission" date="2009-01" db="EMBL/GenBank/DDBJ databases">
        <title>Complete sequence of Clostridium cellulolyticum H10.</title>
        <authorList>
            <consortium name="US DOE Joint Genome Institute"/>
            <person name="Lucas S."/>
            <person name="Copeland A."/>
            <person name="Lapidus A."/>
            <person name="Glavina del Rio T."/>
            <person name="Dalin E."/>
            <person name="Tice H."/>
            <person name="Bruce D."/>
            <person name="Goodwin L."/>
            <person name="Pitluck S."/>
            <person name="Chertkov O."/>
            <person name="Saunders E."/>
            <person name="Brettin T."/>
            <person name="Detter J.C."/>
            <person name="Han C."/>
            <person name="Larimer F."/>
            <person name="Land M."/>
            <person name="Hauser L."/>
            <person name="Kyrpides N."/>
            <person name="Ivanova N."/>
            <person name="Zhou J."/>
            <person name="Richardson P."/>
        </authorList>
    </citation>
    <scope>NUCLEOTIDE SEQUENCE [LARGE SCALE GENOMIC DNA]</scope>
    <source>
        <strain>ATCC 35319 / DSM 5812 / JCM 6584 / H10</strain>
    </source>
</reference>
<sequence length="1149" mass="132140">MGLQFIYGRAGSGKSFHCLNSIKTKQNKDSNKKLVLIVPEQYTLQAERDLIKVLGTGGILKTEVLSFRRMAYRVLNEVGGITYPHIHPSGKNMIIYRILERLKDQFTIFHKSANCKGFVNTLSTLITELKRYNVRAESFDEVLQGLADDNYLSHKLKEIKLIYSEFDSMLVDRYRDTDDELTLLSSKLEGTEIYAKSEIWIDGFAGFTPQEVEVISKLIQQAENVHITMCTDILFDDVQADLTDVFAAVKKSCKKFVSIAESYGVKILPPVCLNTPNLPRFKDSRELQSLETNYCSYSYRAYQLPTQDIELFESVNIYTEIEECARDIIKQCRDNGMQFKDITVATRNLTGYENLIGVIFEQYNIPCFIDSKTEITNHPLVRMVLSMLEIFTENWSYESVFRYLKSGLTGIDNTKIDILENYVLACGIRGSRWTQEADWNTSIEFRPDDGQKPENDEMLLNINKTRNEIREPLIRFRNRTKGRRTAGDFCAGIYEYLVEIGVEQRIRNYIEKFTQSGQLRLAGEYQQVWNILMDVFDQAVEVMADETFGLEKFANVFKIGLAEYKISSIPASLDQVLVGSIEHIRSHEIKALYILGTNDGVFPSAGMSEGVLSDADREVLDKRGIELASDTKTRAFDEQYLIYRTLTTPKNYLRLSWPIADHEGRTMRPSTIISRMRKIFPKVTEKSNIVKPSADKQHIDLIASPIPAFNQLVCALRQKNEGIEQGEIWREIFAWFSGQDEWKQKCDAMINALKYRNIAAPVDKSKIRELYGKSPYFTVSRLEKYTSCPFAFYVQYGLGARERKIYRMSPPDVGTFMHAVIERFSKMVDENNYSWREFDRQWCSEQVSKIVDELLDSMKNTILGGSKRFKALAVRLKRVVTRAVWLITEHIRRSSFEPVGYEVDFGDGGAYPPMVIELDSGEKIRLVGRIDRIDALRAENGTYLRIVDYKSGEKDFKLSDVYYGLQMQLITYLDALWEYSDKSNGEKIIPGGILYFRIDDPMIRCTDNSTPEEIETAIMKKLKMKGLLLADVQLIKYMDNTIEGNSIIIPARINKGDVLGKSSAATIEQFTVLRSYVKQLLKDMCSELMKGNVPISPYKKKKLTSCSYCNYSSVCQFDQSQKENSFRMLHDREDNDIWKLMNEIDVKDN</sequence>
<name>ADDB_RUMCH</name>
<accession>B8I2Y3</accession>
<keyword id="KW-0004">4Fe-4S</keyword>
<keyword id="KW-0067">ATP-binding</keyword>
<keyword id="KW-0227">DNA damage</keyword>
<keyword id="KW-0234">DNA repair</keyword>
<keyword id="KW-0238">DNA-binding</keyword>
<keyword id="KW-0269">Exonuclease</keyword>
<keyword id="KW-0347">Helicase</keyword>
<keyword id="KW-0378">Hydrolase</keyword>
<keyword id="KW-0408">Iron</keyword>
<keyword id="KW-0411">Iron-sulfur</keyword>
<keyword id="KW-0479">Metal-binding</keyword>
<keyword id="KW-0540">Nuclease</keyword>
<keyword id="KW-0547">Nucleotide-binding</keyword>
<keyword id="KW-1185">Reference proteome</keyword>
<gene>
    <name evidence="1" type="primary">addB</name>
    <name type="ordered locus">Ccel_1775</name>
</gene>
<dbReference type="EC" id="3.1.-.-" evidence="1"/>
<dbReference type="EMBL" id="CP001348">
    <property type="protein sequence ID" value="ACL76126.1"/>
    <property type="molecule type" value="Genomic_DNA"/>
</dbReference>
<dbReference type="RefSeq" id="WP_015925241.1">
    <property type="nucleotide sequence ID" value="NC_011898.1"/>
</dbReference>
<dbReference type="SMR" id="B8I2Y3"/>
<dbReference type="STRING" id="394503.Ccel_1775"/>
<dbReference type="KEGG" id="cce:Ccel_1775"/>
<dbReference type="eggNOG" id="COG3857">
    <property type="taxonomic scope" value="Bacteria"/>
</dbReference>
<dbReference type="HOGENOM" id="CLU_007838_0_0_9"/>
<dbReference type="OrthoDB" id="9758506at2"/>
<dbReference type="Proteomes" id="UP000001349">
    <property type="component" value="Chromosome"/>
</dbReference>
<dbReference type="GO" id="GO:0051539">
    <property type="term" value="F:4 iron, 4 sulfur cluster binding"/>
    <property type="evidence" value="ECO:0007669"/>
    <property type="project" value="UniProtKB-KW"/>
</dbReference>
<dbReference type="GO" id="GO:0008409">
    <property type="term" value="F:5'-3' exonuclease activity"/>
    <property type="evidence" value="ECO:0007669"/>
    <property type="project" value="UniProtKB-UniRule"/>
</dbReference>
<dbReference type="GO" id="GO:0005524">
    <property type="term" value="F:ATP binding"/>
    <property type="evidence" value="ECO:0007669"/>
    <property type="project" value="UniProtKB-UniRule"/>
</dbReference>
<dbReference type="GO" id="GO:0003690">
    <property type="term" value="F:double-stranded DNA binding"/>
    <property type="evidence" value="ECO:0007669"/>
    <property type="project" value="UniProtKB-UniRule"/>
</dbReference>
<dbReference type="GO" id="GO:0004386">
    <property type="term" value="F:helicase activity"/>
    <property type="evidence" value="ECO:0007669"/>
    <property type="project" value="UniProtKB-KW"/>
</dbReference>
<dbReference type="GO" id="GO:0046872">
    <property type="term" value="F:metal ion binding"/>
    <property type="evidence" value="ECO:0007669"/>
    <property type="project" value="UniProtKB-KW"/>
</dbReference>
<dbReference type="GO" id="GO:0000724">
    <property type="term" value="P:double-strand break repair via homologous recombination"/>
    <property type="evidence" value="ECO:0007669"/>
    <property type="project" value="UniProtKB-UniRule"/>
</dbReference>
<dbReference type="Gene3D" id="3.90.320.10">
    <property type="match status" value="1"/>
</dbReference>
<dbReference type="Gene3D" id="6.10.140.1030">
    <property type="match status" value="1"/>
</dbReference>
<dbReference type="Gene3D" id="3.40.50.300">
    <property type="entry name" value="P-loop containing nucleotide triphosphate hydrolases"/>
    <property type="match status" value="3"/>
</dbReference>
<dbReference type="HAMAP" id="MF_01452">
    <property type="entry name" value="AddB_type1"/>
    <property type="match status" value="1"/>
</dbReference>
<dbReference type="InterPro" id="IPR049035">
    <property type="entry name" value="ADDB_N"/>
</dbReference>
<dbReference type="InterPro" id="IPR014140">
    <property type="entry name" value="DNA_helicase_suAddB"/>
</dbReference>
<dbReference type="InterPro" id="IPR014017">
    <property type="entry name" value="DNA_helicase_UvrD-like_C"/>
</dbReference>
<dbReference type="InterPro" id="IPR027417">
    <property type="entry name" value="P-loop_NTPase"/>
</dbReference>
<dbReference type="InterPro" id="IPR011604">
    <property type="entry name" value="PDDEXK-like_dom_sf"/>
</dbReference>
<dbReference type="InterPro" id="IPR038726">
    <property type="entry name" value="PDDEXK_AddAB-type"/>
</dbReference>
<dbReference type="NCBIfam" id="TIGR02773">
    <property type="entry name" value="addB_Gpos"/>
    <property type="match status" value="1"/>
</dbReference>
<dbReference type="PANTHER" id="PTHR30591">
    <property type="entry name" value="RECBCD ENZYME SUBUNIT RECC"/>
    <property type="match status" value="1"/>
</dbReference>
<dbReference type="PANTHER" id="PTHR30591:SF1">
    <property type="entry name" value="RECBCD ENZYME SUBUNIT RECC"/>
    <property type="match status" value="1"/>
</dbReference>
<dbReference type="Pfam" id="PF21445">
    <property type="entry name" value="ADDB_N"/>
    <property type="match status" value="1"/>
</dbReference>
<dbReference type="Pfam" id="PF12705">
    <property type="entry name" value="PDDEXK_1"/>
    <property type="match status" value="1"/>
</dbReference>
<dbReference type="Pfam" id="PF13361">
    <property type="entry name" value="UvrD_C"/>
    <property type="match status" value="1"/>
</dbReference>
<dbReference type="SUPFAM" id="SSF52540">
    <property type="entry name" value="P-loop containing nucleoside triphosphate hydrolases"/>
    <property type="match status" value="1"/>
</dbReference>